<proteinExistence type="evidence at transcript level"/>
<accession>Q07204</accession>
<gene>
    <name type="primary">FBP</name>
</gene>
<evidence type="ECO:0000250" key="1"/>
<evidence type="ECO:0000305" key="2"/>
<feature type="transit peptide" description="Chloroplast" evidence="1">
    <location>
        <begin position="1"/>
        <end position="53"/>
    </location>
</feature>
<feature type="chain" id="PRO_0000008815" description="Fructose-1,6-bisphosphatase, chloroplastic">
    <location>
        <begin position="54"/>
        <end position="411"/>
    </location>
</feature>
<feature type="binding site" evidence="1">
    <location>
        <position position="133"/>
    </location>
    <ligand>
        <name>Mg(2+)</name>
        <dbReference type="ChEBI" id="CHEBI:18420"/>
        <label>1</label>
    </ligand>
</feature>
<feature type="binding site" evidence="1">
    <location>
        <position position="162"/>
    </location>
    <ligand>
        <name>Mg(2+)</name>
        <dbReference type="ChEBI" id="CHEBI:18420"/>
        <label>1</label>
    </ligand>
</feature>
<feature type="binding site" evidence="1">
    <location>
        <position position="162"/>
    </location>
    <ligand>
        <name>Mg(2+)</name>
        <dbReference type="ChEBI" id="CHEBI:18420"/>
        <label>2</label>
    </ligand>
</feature>
<feature type="binding site" evidence="1">
    <location>
        <position position="183"/>
    </location>
    <ligand>
        <name>Mg(2+)</name>
        <dbReference type="ChEBI" id="CHEBI:18420"/>
        <label>2</label>
    </ligand>
</feature>
<feature type="binding site" evidence="1">
    <location>
        <position position="183"/>
    </location>
    <ligand>
        <name>Mg(2+)</name>
        <dbReference type="ChEBI" id="CHEBI:18420"/>
        <label>3</label>
    </ligand>
</feature>
<feature type="binding site" evidence="1">
    <location>
        <position position="185"/>
    </location>
    <ligand>
        <name>Mg(2+)</name>
        <dbReference type="ChEBI" id="CHEBI:18420"/>
        <label>2</label>
    </ligand>
</feature>
<feature type="binding site" evidence="1">
    <location>
        <begin position="186"/>
        <end position="189"/>
    </location>
    <ligand>
        <name>substrate</name>
    </ligand>
</feature>
<feature type="binding site" evidence="1">
    <location>
        <position position="186"/>
    </location>
    <ligand>
        <name>Mg(2+)</name>
        <dbReference type="ChEBI" id="CHEBI:18420"/>
        <label>3</label>
    </ligand>
</feature>
<feature type="binding site" evidence="1">
    <location>
        <position position="291"/>
    </location>
    <ligand>
        <name>substrate</name>
    </ligand>
</feature>
<feature type="binding site" evidence="1">
    <location>
        <position position="323"/>
    </location>
    <ligand>
        <name>substrate</name>
    </ligand>
</feature>
<feature type="binding site" evidence="1">
    <location>
        <position position="341"/>
    </location>
    <ligand>
        <name>substrate</name>
    </ligand>
</feature>
<feature type="binding site" evidence="1">
    <location>
        <position position="343"/>
    </location>
    <ligand>
        <name>substrate</name>
    </ligand>
</feature>
<feature type="binding site" evidence="1">
    <location>
        <position position="353"/>
    </location>
    <ligand>
        <name>substrate</name>
    </ligand>
</feature>
<feature type="binding site" evidence="1">
    <location>
        <position position="359"/>
    </location>
    <ligand>
        <name>Mg(2+)</name>
        <dbReference type="ChEBI" id="CHEBI:18420"/>
        <label>3</label>
    </ligand>
</feature>
<feature type="disulfide bond" description="Redox-active (light-modulated)" evidence="1">
    <location>
        <begin position="227"/>
        <end position="232"/>
    </location>
</feature>
<reference key="1">
    <citation type="journal article" date="1993" name="Plant Physiol.">
        <title>Sequence of a cDNA encoding chloroplast fructose-1,6-bisphosphatase from rapeseed.</title>
        <authorList>
            <person name="Rodriguez-Suarez R.J."/>
            <person name="Wolosiuk R.A."/>
        </authorList>
    </citation>
    <scope>NUCLEOTIDE SEQUENCE [MRNA]</scope>
</reference>
<comment type="catalytic activity">
    <reaction>
        <text>beta-D-fructose 1,6-bisphosphate + H2O = beta-D-fructose 6-phosphate + phosphate</text>
        <dbReference type="Rhea" id="RHEA:11064"/>
        <dbReference type="ChEBI" id="CHEBI:15377"/>
        <dbReference type="ChEBI" id="CHEBI:32966"/>
        <dbReference type="ChEBI" id="CHEBI:43474"/>
        <dbReference type="ChEBI" id="CHEBI:57634"/>
        <dbReference type="EC" id="3.1.3.11"/>
    </reaction>
</comment>
<comment type="cofactor">
    <cofactor evidence="1">
        <name>Mg(2+)</name>
        <dbReference type="ChEBI" id="CHEBI:18420"/>
    </cofactor>
    <text evidence="1">Binds 3 Mg(2+) ions per subunit.</text>
</comment>
<comment type="pathway">
    <text>Carbohydrate biosynthesis; Calvin cycle.</text>
</comment>
<comment type="subunit">
    <text evidence="1">Homotetramer.</text>
</comment>
<comment type="subcellular location">
    <subcellularLocation>
        <location>Plastid</location>
        <location>Chloroplast stroma</location>
    </subcellularLocation>
</comment>
<comment type="induction">
    <text evidence="1">Light activation through pH changes, Mg(2+) levels and also by light-modulated reduction of essential disulfide groups via the ferredoxin-thioredoxin f system.</text>
</comment>
<comment type="miscellaneous">
    <text>In plants there are two FBPase isozymes: one in the cytosol and the other in the chloroplast.</text>
</comment>
<comment type="similarity">
    <text evidence="2">Belongs to the FBPase class 1 family.</text>
</comment>
<sequence>MAATAGATPSSHLLLSSSRHVAASPQPRILFPSLSGKRVAVGKNHHATGVRCMAVAADATAETKPAAKKKSGYELQTLTSWLLRQEMKGEIDTELTIVMSSIAMACKQIASLVQRAGISNLTGVQGAVNIQGEDQKKLDVVSNEVFSNCLRSSGRTGIIASEEEDVPVAVEESYSGNYVVVFDPLDGSSNIDAAVSTGSIFGIYSPNDECLPDSDDTSALGSEEERCIVNVCQPGNNLLAAGYCMYSSSVIFVLTLGKGVFAFTLDPMYGEFVLTQENIEIPKAGKIYSFNEGNYQMWDENLKKYIDDLKDPGPSGKPYSARYIGSLVGDFHRTLLYGGIYGYPRDAKSKNGKLRLLYECAPMSFIVEQAGGKGSDGHHRVLDIQPTEIHQRVPLYIGSKEEVEKLEKYLA</sequence>
<keyword id="KW-0113">Calvin cycle</keyword>
<keyword id="KW-0119">Carbohydrate metabolism</keyword>
<keyword id="KW-0150">Chloroplast</keyword>
<keyword id="KW-1015">Disulfide bond</keyword>
<keyword id="KW-0378">Hydrolase</keyword>
<keyword id="KW-0460">Magnesium</keyword>
<keyword id="KW-0479">Metal-binding</keyword>
<keyword id="KW-0934">Plastid</keyword>
<keyword id="KW-0809">Transit peptide</keyword>
<dbReference type="EC" id="3.1.3.11"/>
<dbReference type="EMBL" id="L15303">
    <property type="protein sequence ID" value="AAB88708.1"/>
    <property type="molecule type" value="mRNA"/>
</dbReference>
<dbReference type="PIR" id="T07987">
    <property type="entry name" value="T07987"/>
</dbReference>
<dbReference type="RefSeq" id="NP_001302992.1">
    <property type="nucleotide sequence ID" value="NM_001316063.1"/>
</dbReference>
<dbReference type="RefSeq" id="XP_013717954.1">
    <property type="nucleotide sequence ID" value="XM_013862500.1"/>
</dbReference>
<dbReference type="SMR" id="Q07204"/>
<dbReference type="EnsemblPlants" id="CDY13182">
    <property type="protein sequence ID" value="CDY13182"/>
    <property type="gene ID" value="GSBRNA2T00071053001"/>
</dbReference>
<dbReference type="GeneID" id="106421663"/>
<dbReference type="Gramene" id="CDY13182">
    <property type="protein sequence ID" value="CDY13182"/>
    <property type="gene ID" value="GSBRNA2T00071053001"/>
</dbReference>
<dbReference type="KEGG" id="bna:106421663"/>
<dbReference type="OrthoDB" id="10256725at2759"/>
<dbReference type="UniPathway" id="UPA00116"/>
<dbReference type="GO" id="GO:0009570">
    <property type="term" value="C:chloroplast stroma"/>
    <property type="evidence" value="ECO:0007669"/>
    <property type="project" value="UniProtKB-SubCell"/>
</dbReference>
<dbReference type="GO" id="GO:0042132">
    <property type="term" value="F:fructose 1,6-bisphosphate 1-phosphatase activity"/>
    <property type="evidence" value="ECO:0007669"/>
    <property type="project" value="UniProtKB-EC"/>
</dbReference>
<dbReference type="GO" id="GO:0046872">
    <property type="term" value="F:metal ion binding"/>
    <property type="evidence" value="ECO:0007669"/>
    <property type="project" value="UniProtKB-KW"/>
</dbReference>
<dbReference type="GO" id="GO:0019253">
    <property type="term" value="P:reductive pentose-phosphate cycle"/>
    <property type="evidence" value="ECO:0007669"/>
    <property type="project" value="UniProtKB-UniPathway"/>
</dbReference>
<dbReference type="CDD" id="cd00354">
    <property type="entry name" value="FBPase"/>
    <property type="match status" value="1"/>
</dbReference>
<dbReference type="FunFam" id="3.40.190.80:FF:000001">
    <property type="entry name" value="Fructose-1,6-bisphosphatase class 1"/>
    <property type="match status" value="1"/>
</dbReference>
<dbReference type="FunFam" id="3.30.540.10:FF:000014">
    <property type="entry name" value="Fructose-1,6-bisphosphatase, chloroplastic"/>
    <property type="match status" value="1"/>
</dbReference>
<dbReference type="Gene3D" id="3.40.190.80">
    <property type="match status" value="1"/>
</dbReference>
<dbReference type="Gene3D" id="3.30.540.10">
    <property type="entry name" value="Fructose-1,6-Bisphosphatase, subunit A, domain 1"/>
    <property type="match status" value="1"/>
</dbReference>
<dbReference type="HAMAP" id="MF_01855">
    <property type="entry name" value="FBPase_class1"/>
    <property type="match status" value="1"/>
</dbReference>
<dbReference type="InterPro" id="IPR044015">
    <property type="entry name" value="FBPase_C_dom"/>
</dbReference>
<dbReference type="InterPro" id="IPR000146">
    <property type="entry name" value="FBPase_class-1"/>
</dbReference>
<dbReference type="InterPro" id="IPR033391">
    <property type="entry name" value="FBPase_N"/>
</dbReference>
<dbReference type="InterPro" id="IPR028343">
    <property type="entry name" value="FBPtase"/>
</dbReference>
<dbReference type="InterPro" id="IPR020548">
    <property type="entry name" value="Fructose_bisphosphatase_AS"/>
</dbReference>
<dbReference type="NCBIfam" id="NF006778">
    <property type="entry name" value="PRK09293.1-1"/>
    <property type="match status" value="1"/>
</dbReference>
<dbReference type="PANTHER" id="PTHR11556">
    <property type="entry name" value="FRUCTOSE-1,6-BISPHOSPHATASE-RELATED"/>
    <property type="match status" value="1"/>
</dbReference>
<dbReference type="PANTHER" id="PTHR11556:SF39">
    <property type="entry name" value="FRUCTOSE-BISPHOSPHATASE"/>
    <property type="match status" value="1"/>
</dbReference>
<dbReference type="Pfam" id="PF00316">
    <property type="entry name" value="FBPase"/>
    <property type="match status" value="1"/>
</dbReference>
<dbReference type="Pfam" id="PF18913">
    <property type="entry name" value="FBPase_C"/>
    <property type="match status" value="1"/>
</dbReference>
<dbReference type="PIRSF" id="PIRSF500210">
    <property type="entry name" value="FBPtase"/>
    <property type="match status" value="1"/>
</dbReference>
<dbReference type="PIRSF" id="PIRSF000904">
    <property type="entry name" value="FBPtase_SBPase"/>
    <property type="match status" value="1"/>
</dbReference>
<dbReference type="PRINTS" id="PR00115">
    <property type="entry name" value="F16BPHPHTASE"/>
</dbReference>
<dbReference type="SUPFAM" id="SSF56655">
    <property type="entry name" value="Carbohydrate phosphatase"/>
    <property type="match status" value="1"/>
</dbReference>
<dbReference type="PROSITE" id="PS00124">
    <property type="entry name" value="FBPASE"/>
    <property type="match status" value="1"/>
</dbReference>
<protein>
    <recommendedName>
        <fullName>Fructose-1,6-bisphosphatase, chloroplastic</fullName>
        <shortName>FBPase</shortName>
        <ecNumber>3.1.3.11</ecNumber>
    </recommendedName>
    <alternativeName>
        <fullName>D-fructose-1,6-bisphosphate 1-phosphohydrolase</fullName>
    </alternativeName>
</protein>
<organism>
    <name type="scientific">Brassica napus</name>
    <name type="common">Rape</name>
    <dbReference type="NCBI Taxonomy" id="3708"/>
    <lineage>
        <taxon>Eukaryota</taxon>
        <taxon>Viridiplantae</taxon>
        <taxon>Streptophyta</taxon>
        <taxon>Embryophyta</taxon>
        <taxon>Tracheophyta</taxon>
        <taxon>Spermatophyta</taxon>
        <taxon>Magnoliopsida</taxon>
        <taxon>eudicotyledons</taxon>
        <taxon>Gunneridae</taxon>
        <taxon>Pentapetalae</taxon>
        <taxon>rosids</taxon>
        <taxon>malvids</taxon>
        <taxon>Brassicales</taxon>
        <taxon>Brassicaceae</taxon>
        <taxon>Brassiceae</taxon>
        <taxon>Brassica</taxon>
    </lineage>
</organism>
<name>F16P1_BRANA</name>